<dbReference type="EC" id="3.6.1.54" evidence="1"/>
<dbReference type="EMBL" id="CP001277">
    <property type="protein sequence ID" value="ACQ68162.1"/>
    <property type="molecule type" value="Genomic_DNA"/>
</dbReference>
<dbReference type="RefSeq" id="WP_015873930.1">
    <property type="nucleotide sequence ID" value="NC_012751.1"/>
</dbReference>
<dbReference type="SMR" id="C4K6H0"/>
<dbReference type="STRING" id="572265.HDEF_1543"/>
<dbReference type="GeneID" id="66261187"/>
<dbReference type="KEGG" id="hde:HDEF_1543"/>
<dbReference type="eggNOG" id="COG2908">
    <property type="taxonomic scope" value="Bacteria"/>
</dbReference>
<dbReference type="HOGENOM" id="CLU_074586_0_0_6"/>
<dbReference type="UniPathway" id="UPA00359">
    <property type="reaction ID" value="UER00480"/>
</dbReference>
<dbReference type="Proteomes" id="UP000002334">
    <property type="component" value="Chromosome"/>
</dbReference>
<dbReference type="GO" id="GO:0005737">
    <property type="term" value="C:cytoplasm"/>
    <property type="evidence" value="ECO:0007669"/>
    <property type="project" value="InterPro"/>
</dbReference>
<dbReference type="GO" id="GO:0019897">
    <property type="term" value="C:extrinsic component of plasma membrane"/>
    <property type="evidence" value="ECO:0007669"/>
    <property type="project" value="UniProtKB-UniRule"/>
</dbReference>
<dbReference type="GO" id="GO:0030145">
    <property type="term" value="F:manganese ion binding"/>
    <property type="evidence" value="ECO:0007669"/>
    <property type="project" value="UniProtKB-UniRule"/>
</dbReference>
<dbReference type="GO" id="GO:0008758">
    <property type="term" value="F:UDP-2,3-diacylglucosamine hydrolase activity"/>
    <property type="evidence" value="ECO:0007669"/>
    <property type="project" value="UniProtKB-UniRule"/>
</dbReference>
<dbReference type="GO" id="GO:0009245">
    <property type="term" value="P:lipid A biosynthetic process"/>
    <property type="evidence" value="ECO:0007669"/>
    <property type="project" value="UniProtKB-UniRule"/>
</dbReference>
<dbReference type="CDD" id="cd07398">
    <property type="entry name" value="MPP_YbbF-LpxH"/>
    <property type="match status" value="1"/>
</dbReference>
<dbReference type="Gene3D" id="3.60.21.10">
    <property type="match status" value="1"/>
</dbReference>
<dbReference type="HAMAP" id="MF_00575">
    <property type="entry name" value="LpxH"/>
    <property type="match status" value="1"/>
</dbReference>
<dbReference type="InterPro" id="IPR004843">
    <property type="entry name" value="Calcineurin-like_PHP_ApaH"/>
</dbReference>
<dbReference type="InterPro" id="IPR043461">
    <property type="entry name" value="LpxH-like"/>
</dbReference>
<dbReference type="InterPro" id="IPR029052">
    <property type="entry name" value="Metallo-depent_PP-like"/>
</dbReference>
<dbReference type="InterPro" id="IPR010138">
    <property type="entry name" value="UDP-diacylglucosamine_Hdrlase"/>
</dbReference>
<dbReference type="NCBIfam" id="TIGR01854">
    <property type="entry name" value="lipid_A_lpxH"/>
    <property type="match status" value="1"/>
</dbReference>
<dbReference type="NCBIfam" id="NF003743">
    <property type="entry name" value="PRK05340.1"/>
    <property type="match status" value="1"/>
</dbReference>
<dbReference type="PANTHER" id="PTHR34990:SF1">
    <property type="entry name" value="UDP-2,3-DIACYLGLUCOSAMINE HYDROLASE"/>
    <property type="match status" value="1"/>
</dbReference>
<dbReference type="PANTHER" id="PTHR34990">
    <property type="entry name" value="UDP-2,3-DIACYLGLUCOSAMINE HYDROLASE-RELATED"/>
    <property type="match status" value="1"/>
</dbReference>
<dbReference type="Pfam" id="PF00149">
    <property type="entry name" value="Metallophos"/>
    <property type="match status" value="1"/>
</dbReference>
<dbReference type="SUPFAM" id="SSF56300">
    <property type="entry name" value="Metallo-dependent phosphatases"/>
    <property type="match status" value="1"/>
</dbReference>
<proteinExistence type="inferred from homology"/>
<keyword id="KW-0997">Cell inner membrane</keyword>
<keyword id="KW-1003">Cell membrane</keyword>
<keyword id="KW-0378">Hydrolase</keyword>
<keyword id="KW-0441">Lipid A biosynthesis</keyword>
<keyword id="KW-0444">Lipid biosynthesis</keyword>
<keyword id="KW-0443">Lipid metabolism</keyword>
<keyword id="KW-0464">Manganese</keyword>
<keyword id="KW-0472">Membrane</keyword>
<keyword id="KW-0479">Metal-binding</keyword>
<comment type="function">
    <text evidence="1">Hydrolyzes the pyrophosphate bond of UDP-2,3-diacylglucosamine to yield 2,3-diacylglucosamine 1-phosphate (lipid X) and UMP by catalyzing the attack of water at the alpha-P atom. Involved in the biosynthesis of lipid A, a phosphorylated glycolipid that anchors the lipopolysaccharide to the outer membrane of the cell.</text>
</comment>
<comment type="catalytic activity">
    <reaction evidence="1">
        <text>UDP-2-N,3-O-bis[(3R)-3-hydroxytetradecanoyl]-alpha-D-glucosamine + H2O = 2-N,3-O-bis[(3R)-3-hydroxytetradecanoyl]-alpha-D-glucosaminyl 1-phosphate + UMP + 2 H(+)</text>
        <dbReference type="Rhea" id="RHEA:25213"/>
        <dbReference type="ChEBI" id="CHEBI:15377"/>
        <dbReference type="ChEBI" id="CHEBI:15378"/>
        <dbReference type="ChEBI" id="CHEBI:57865"/>
        <dbReference type="ChEBI" id="CHEBI:57957"/>
        <dbReference type="ChEBI" id="CHEBI:78847"/>
        <dbReference type="EC" id="3.6.1.54"/>
    </reaction>
</comment>
<comment type="cofactor">
    <cofactor evidence="1">
        <name>Mn(2+)</name>
        <dbReference type="ChEBI" id="CHEBI:29035"/>
    </cofactor>
    <text evidence="1">Binds 2 Mn(2+) ions per subunit in a binuclear metal center.</text>
</comment>
<comment type="pathway">
    <text evidence="1">Glycolipid biosynthesis; lipid IV(A) biosynthesis; lipid IV(A) from (3R)-3-hydroxytetradecanoyl-[acyl-carrier-protein] and UDP-N-acetyl-alpha-D-glucosamine: step 4/6.</text>
</comment>
<comment type="subcellular location">
    <subcellularLocation>
        <location evidence="1">Cell inner membrane</location>
        <topology evidence="1">Peripheral membrane protein</topology>
        <orientation evidence="1">Cytoplasmic side</orientation>
    </subcellularLocation>
</comment>
<comment type="similarity">
    <text evidence="1">Belongs to the LpxH family.</text>
</comment>
<name>LPXH_HAMD5</name>
<accession>C4K6H0</accession>
<gene>
    <name evidence="1" type="primary">lpxH</name>
    <name type="ordered locus">HDEF_1543</name>
</gene>
<evidence type="ECO:0000255" key="1">
    <source>
        <dbReference type="HAMAP-Rule" id="MF_00575"/>
    </source>
</evidence>
<sequence length="255" mass="29672">MSTLFIGDIHLSVEYPEITKNFFRFLQTEATQAESLYILGDLFDKWIGDDDPHPFYREVAAELFALKKKGIPCYFIHGNRDFLIGQAFADESGMILLPECKVIQLYDYNICILHGDTLCTKDTEYQIFRKIAHHRFIQRLFLCLPLSFRFYIAKKLRLQSGEQNKKKGEEIMDVDPQSVLDLMACHDVDWIIHGHTHRPAIHNIEMIVTPLLSSKKIARRAVLSAWHNEGSMIKVTFDAIELIFFPFRVSDFEKI</sequence>
<feature type="chain" id="PRO_1000212094" description="UDP-2,3-diacylglucosamine hydrolase">
    <location>
        <begin position="1"/>
        <end position="255"/>
    </location>
</feature>
<feature type="binding site" evidence="1">
    <location>
        <position position="8"/>
    </location>
    <ligand>
        <name>Mn(2+)</name>
        <dbReference type="ChEBI" id="CHEBI:29035"/>
        <label>1</label>
    </ligand>
</feature>
<feature type="binding site" evidence="1">
    <location>
        <position position="10"/>
    </location>
    <ligand>
        <name>Mn(2+)</name>
        <dbReference type="ChEBI" id="CHEBI:29035"/>
        <label>1</label>
    </ligand>
</feature>
<feature type="binding site" evidence="1">
    <location>
        <position position="41"/>
    </location>
    <ligand>
        <name>Mn(2+)</name>
        <dbReference type="ChEBI" id="CHEBI:29035"/>
        <label>1</label>
    </ligand>
</feature>
<feature type="binding site" evidence="1">
    <location>
        <position position="41"/>
    </location>
    <ligand>
        <name>Mn(2+)</name>
        <dbReference type="ChEBI" id="CHEBI:29035"/>
        <label>2</label>
    </ligand>
</feature>
<feature type="binding site" evidence="1">
    <location>
        <begin position="79"/>
        <end position="80"/>
    </location>
    <ligand>
        <name>substrate</name>
    </ligand>
</feature>
<feature type="binding site" evidence="1">
    <location>
        <position position="79"/>
    </location>
    <ligand>
        <name>Mn(2+)</name>
        <dbReference type="ChEBI" id="CHEBI:29035"/>
        <label>2</label>
    </ligand>
</feature>
<feature type="binding site" evidence="1">
    <location>
        <position position="114"/>
    </location>
    <ligand>
        <name>Mn(2+)</name>
        <dbReference type="ChEBI" id="CHEBI:29035"/>
        <label>2</label>
    </ligand>
</feature>
<feature type="binding site" evidence="1">
    <location>
        <position position="122"/>
    </location>
    <ligand>
        <name>substrate</name>
    </ligand>
</feature>
<feature type="binding site" evidence="1">
    <location>
        <position position="160"/>
    </location>
    <ligand>
        <name>substrate</name>
    </ligand>
</feature>
<feature type="binding site" evidence="1">
    <location>
        <position position="164"/>
    </location>
    <ligand>
        <name>substrate</name>
    </ligand>
</feature>
<feature type="binding site" evidence="1">
    <location>
        <position position="167"/>
    </location>
    <ligand>
        <name>substrate</name>
    </ligand>
</feature>
<feature type="binding site" evidence="1">
    <location>
        <position position="195"/>
    </location>
    <ligand>
        <name>Mn(2+)</name>
        <dbReference type="ChEBI" id="CHEBI:29035"/>
        <label>2</label>
    </ligand>
</feature>
<feature type="binding site" evidence="1">
    <location>
        <position position="195"/>
    </location>
    <ligand>
        <name>substrate</name>
    </ligand>
</feature>
<feature type="binding site" evidence="1">
    <location>
        <position position="197"/>
    </location>
    <ligand>
        <name>Mn(2+)</name>
        <dbReference type="ChEBI" id="CHEBI:29035"/>
        <label>1</label>
    </ligand>
</feature>
<organism>
    <name type="scientific">Hamiltonella defensa subsp. Acyrthosiphon pisum (strain 5AT)</name>
    <dbReference type="NCBI Taxonomy" id="572265"/>
    <lineage>
        <taxon>Bacteria</taxon>
        <taxon>Pseudomonadati</taxon>
        <taxon>Pseudomonadota</taxon>
        <taxon>Gammaproteobacteria</taxon>
        <taxon>Enterobacterales</taxon>
        <taxon>Enterobacteriaceae</taxon>
        <taxon>aphid secondary symbionts</taxon>
        <taxon>Candidatus Hamiltonella</taxon>
    </lineage>
</organism>
<reference key="1">
    <citation type="journal article" date="2009" name="Proc. Natl. Acad. Sci. U.S.A.">
        <title>Hamiltonella defensa, genome evolution of protective bacterial endosymbiont from pathogenic ancestors.</title>
        <authorList>
            <person name="Degnan P.H."/>
            <person name="Yu Y."/>
            <person name="Sisneros N."/>
            <person name="Wing R.A."/>
            <person name="Moran N.A."/>
        </authorList>
    </citation>
    <scope>NUCLEOTIDE SEQUENCE [LARGE SCALE GENOMIC DNA]</scope>
    <source>
        <strain>5AT</strain>
    </source>
</reference>
<protein>
    <recommendedName>
        <fullName evidence="1">UDP-2,3-diacylglucosamine hydrolase</fullName>
        <ecNumber evidence="1">3.6.1.54</ecNumber>
    </recommendedName>
    <alternativeName>
        <fullName evidence="1">UDP-2,3-diacylglucosamine diphosphatase</fullName>
    </alternativeName>
</protein>